<geneLocation type="chloroplast"/>
<accession>P69632</accession>
<accession>O19815</accession>
<accession>O19983</accession>
<protein>
    <recommendedName>
        <fullName evidence="2">Small ribosomal subunit protein uS4c</fullName>
    </recommendedName>
    <alternativeName>
        <fullName>30S ribosomal protein S4, chloroplastic</fullName>
    </alternativeName>
</protein>
<gene>
    <name type="primary">rps4</name>
</gene>
<name>RR4_ARICA</name>
<keyword id="KW-0150">Chloroplast</keyword>
<keyword id="KW-0934">Plastid</keyword>
<keyword id="KW-0687">Ribonucleoprotein</keyword>
<keyword id="KW-0689">Ribosomal protein</keyword>
<keyword id="KW-0694">RNA-binding</keyword>
<keyword id="KW-0699">rRNA-binding</keyword>
<proteinExistence type="inferred from homology"/>
<sequence length="183" mass="21254">RFKKIRRLGALPGFTSKRPRSGSDLKNQLRSGKKSQYRIRLEEKQKLRFHYGLTERQLLKYVHIAGKAKGSTGQILLQLLEMRLDNILFRLGMASTIPGARQLVNHRHILVNDRIVDIPSYRCKPRDIITTKNKQRSKALIQNYIASSPHHEELPNHLTIDPFQYKGLVNQIIDNKWIGLKIN</sequence>
<feature type="chain" id="PRO_0000132536" description="Small ribosomal subunit protein uS4c">
    <location>
        <begin position="1" status="less than"/>
        <end position="183" status="greater than"/>
    </location>
</feature>
<feature type="domain" description="S4 RNA-binding">
    <location>
        <begin position="82"/>
        <end position="143"/>
    </location>
</feature>
<feature type="non-terminal residue">
    <location>
        <position position="1"/>
    </location>
</feature>
<feature type="non-terminal residue">
    <location>
        <position position="183"/>
    </location>
</feature>
<organism>
    <name type="scientific">Aristea capitata</name>
    <dbReference type="NCBI Taxonomy" id="58983"/>
    <lineage>
        <taxon>Eukaryota</taxon>
        <taxon>Viridiplantae</taxon>
        <taxon>Streptophyta</taxon>
        <taxon>Embryophyta</taxon>
        <taxon>Tracheophyta</taxon>
        <taxon>Spermatophyta</taxon>
        <taxon>Magnoliopsida</taxon>
        <taxon>Liliopsida</taxon>
        <taxon>Asparagales</taxon>
        <taxon>Iridaceae</taxon>
        <taxon>Aristeoideae</taxon>
        <taxon>Aristea</taxon>
    </lineage>
</organism>
<evidence type="ECO:0000250" key="1"/>
<evidence type="ECO:0000305" key="2"/>
<comment type="function">
    <text evidence="1">One of the primary rRNA binding proteins, it binds directly to 16S rRNA where it nucleates assembly of the body of the 30S subunit.</text>
</comment>
<comment type="function">
    <text evidence="1">With S5 and S12 plays an important role in translational accuracy.</text>
</comment>
<comment type="subunit">
    <text evidence="1">Part of the 30S ribosomal subunit. Contacts protein S5. The interaction surface between S4 and S5 is involved in control of translational fidelity (By similarity).</text>
</comment>
<comment type="subcellular location">
    <subcellularLocation>
        <location>Plastid</location>
        <location>Chloroplast</location>
    </subcellularLocation>
</comment>
<comment type="similarity">
    <text evidence="2">Belongs to the universal ribosomal protein uS4 family.</text>
</comment>
<reference key="1">
    <citation type="journal article" date="1997" name="Plant Syst. Evol.">
        <title>Phylogenetic analysis of Iridaceae with parsimony and distance methods using the plastid gene rps4.</title>
        <authorList>
            <person name="Souza-Chies T.T."/>
            <person name="Bittar G."/>
            <person name="Nadot S."/>
            <person name="Carter L."/>
            <person name="Besin E."/>
            <person name="Lejeune B.P."/>
        </authorList>
    </citation>
    <scope>NUCLEOTIDE SEQUENCE [GENOMIC DNA]</scope>
</reference>
<dbReference type="EMBL" id="Z68233">
    <property type="protein sequence ID" value="CAA92531.1"/>
    <property type="molecule type" value="Genomic_DNA"/>
</dbReference>
<dbReference type="SMR" id="P69632"/>
<dbReference type="GO" id="GO:0009507">
    <property type="term" value="C:chloroplast"/>
    <property type="evidence" value="ECO:0007669"/>
    <property type="project" value="UniProtKB-SubCell"/>
</dbReference>
<dbReference type="GO" id="GO:0015935">
    <property type="term" value="C:small ribosomal subunit"/>
    <property type="evidence" value="ECO:0007669"/>
    <property type="project" value="InterPro"/>
</dbReference>
<dbReference type="GO" id="GO:0019843">
    <property type="term" value="F:rRNA binding"/>
    <property type="evidence" value="ECO:0007669"/>
    <property type="project" value="UniProtKB-KW"/>
</dbReference>
<dbReference type="GO" id="GO:0003735">
    <property type="term" value="F:structural constituent of ribosome"/>
    <property type="evidence" value="ECO:0007669"/>
    <property type="project" value="InterPro"/>
</dbReference>
<dbReference type="GO" id="GO:0042274">
    <property type="term" value="P:ribosomal small subunit biogenesis"/>
    <property type="evidence" value="ECO:0007669"/>
    <property type="project" value="TreeGrafter"/>
</dbReference>
<dbReference type="GO" id="GO:0006412">
    <property type="term" value="P:translation"/>
    <property type="evidence" value="ECO:0007669"/>
    <property type="project" value="InterPro"/>
</dbReference>
<dbReference type="CDD" id="cd00165">
    <property type="entry name" value="S4"/>
    <property type="match status" value="1"/>
</dbReference>
<dbReference type="FunFam" id="1.10.1050.10:FF:000002">
    <property type="entry name" value="30S ribosomal protein S4, chloroplastic"/>
    <property type="match status" value="1"/>
</dbReference>
<dbReference type="FunFam" id="3.10.290.10:FF:000081">
    <property type="entry name" value="30S ribosomal protein S4, chloroplastic"/>
    <property type="match status" value="1"/>
</dbReference>
<dbReference type="Gene3D" id="1.10.1050.10">
    <property type="entry name" value="Ribosomal Protein S4 Delta 41, Chain A, domain 1"/>
    <property type="match status" value="1"/>
</dbReference>
<dbReference type="Gene3D" id="3.10.290.10">
    <property type="entry name" value="RNA-binding S4 domain"/>
    <property type="match status" value="1"/>
</dbReference>
<dbReference type="HAMAP" id="MF_01306_B">
    <property type="entry name" value="Ribosomal_uS4_B"/>
    <property type="match status" value="1"/>
</dbReference>
<dbReference type="InterPro" id="IPR022801">
    <property type="entry name" value="Ribosomal_uS4"/>
</dbReference>
<dbReference type="InterPro" id="IPR005709">
    <property type="entry name" value="Ribosomal_uS4_bac-type"/>
</dbReference>
<dbReference type="InterPro" id="IPR018079">
    <property type="entry name" value="Ribosomal_uS4_CS"/>
</dbReference>
<dbReference type="InterPro" id="IPR001912">
    <property type="entry name" value="Ribosomal_uS4_N"/>
</dbReference>
<dbReference type="InterPro" id="IPR002942">
    <property type="entry name" value="S4_RNA-bd"/>
</dbReference>
<dbReference type="InterPro" id="IPR036986">
    <property type="entry name" value="S4_RNA-bd_sf"/>
</dbReference>
<dbReference type="NCBIfam" id="NF003717">
    <property type="entry name" value="PRK05327.1"/>
    <property type="match status" value="1"/>
</dbReference>
<dbReference type="NCBIfam" id="TIGR01017">
    <property type="entry name" value="rpsD_bact"/>
    <property type="match status" value="1"/>
</dbReference>
<dbReference type="PANTHER" id="PTHR11831">
    <property type="entry name" value="30S 40S RIBOSOMAL PROTEIN"/>
    <property type="match status" value="1"/>
</dbReference>
<dbReference type="PANTHER" id="PTHR11831:SF4">
    <property type="entry name" value="SMALL RIBOSOMAL SUBUNIT PROTEIN US4M"/>
    <property type="match status" value="1"/>
</dbReference>
<dbReference type="Pfam" id="PF00163">
    <property type="entry name" value="Ribosomal_S4"/>
    <property type="match status" value="1"/>
</dbReference>
<dbReference type="Pfam" id="PF01479">
    <property type="entry name" value="S4"/>
    <property type="match status" value="1"/>
</dbReference>
<dbReference type="SMART" id="SM01390">
    <property type="entry name" value="Ribosomal_S4"/>
    <property type="match status" value="1"/>
</dbReference>
<dbReference type="SMART" id="SM00363">
    <property type="entry name" value="S4"/>
    <property type="match status" value="1"/>
</dbReference>
<dbReference type="SUPFAM" id="SSF55174">
    <property type="entry name" value="Alpha-L RNA-binding motif"/>
    <property type="match status" value="1"/>
</dbReference>
<dbReference type="PROSITE" id="PS00632">
    <property type="entry name" value="RIBOSOMAL_S4"/>
    <property type="match status" value="1"/>
</dbReference>
<dbReference type="PROSITE" id="PS50889">
    <property type="entry name" value="S4"/>
    <property type="match status" value="1"/>
</dbReference>